<proteinExistence type="inferred from homology"/>
<dbReference type="EMBL" id="CP001120">
    <property type="protein sequence ID" value="ACF69841.1"/>
    <property type="molecule type" value="Genomic_DNA"/>
</dbReference>
<dbReference type="RefSeq" id="WP_001238917.1">
    <property type="nucleotide sequence ID" value="NC_011083.1"/>
</dbReference>
<dbReference type="SMR" id="B4TJZ0"/>
<dbReference type="GeneID" id="93778686"/>
<dbReference type="KEGG" id="seh:SeHA_C3725"/>
<dbReference type="HOGENOM" id="CLU_055188_4_2_6"/>
<dbReference type="Proteomes" id="UP000001866">
    <property type="component" value="Chromosome"/>
</dbReference>
<dbReference type="GO" id="GO:0022625">
    <property type="term" value="C:cytosolic large ribosomal subunit"/>
    <property type="evidence" value="ECO:0007669"/>
    <property type="project" value="TreeGrafter"/>
</dbReference>
<dbReference type="GO" id="GO:0019843">
    <property type="term" value="F:rRNA binding"/>
    <property type="evidence" value="ECO:0007669"/>
    <property type="project" value="UniProtKB-UniRule"/>
</dbReference>
<dbReference type="GO" id="GO:0003735">
    <property type="term" value="F:structural constituent of ribosome"/>
    <property type="evidence" value="ECO:0007669"/>
    <property type="project" value="InterPro"/>
</dbReference>
<dbReference type="GO" id="GO:0006412">
    <property type="term" value="P:translation"/>
    <property type="evidence" value="ECO:0007669"/>
    <property type="project" value="UniProtKB-UniRule"/>
</dbReference>
<dbReference type="FunFam" id="3.100.10.10:FF:000003">
    <property type="entry name" value="50S ribosomal protein L15"/>
    <property type="match status" value="1"/>
</dbReference>
<dbReference type="Gene3D" id="3.100.10.10">
    <property type="match status" value="1"/>
</dbReference>
<dbReference type="HAMAP" id="MF_01341">
    <property type="entry name" value="Ribosomal_uL15"/>
    <property type="match status" value="1"/>
</dbReference>
<dbReference type="InterPro" id="IPR030878">
    <property type="entry name" value="Ribosomal_uL15"/>
</dbReference>
<dbReference type="InterPro" id="IPR021131">
    <property type="entry name" value="Ribosomal_uL15/eL18"/>
</dbReference>
<dbReference type="InterPro" id="IPR036227">
    <property type="entry name" value="Ribosomal_uL15/eL18_sf"/>
</dbReference>
<dbReference type="InterPro" id="IPR005749">
    <property type="entry name" value="Ribosomal_uL15_bac-type"/>
</dbReference>
<dbReference type="InterPro" id="IPR001196">
    <property type="entry name" value="Ribosomal_uL15_CS"/>
</dbReference>
<dbReference type="NCBIfam" id="TIGR01071">
    <property type="entry name" value="rplO_bact"/>
    <property type="match status" value="1"/>
</dbReference>
<dbReference type="PANTHER" id="PTHR12934">
    <property type="entry name" value="50S RIBOSOMAL PROTEIN L15"/>
    <property type="match status" value="1"/>
</dbReference>
<dbReference type="PANTHER" id="PTHR12934:SF11">
    <property type="entry name" value="LARGE RIBOSOMAL SUBUNIT PROTEIN UL15M"/>
    <property type="match status" value="1"/>
</dbReference>
<dbReference type="Pfam" id="PF00828">
    <property type="entry name" value="Ribosomal_L27A"/>
    <property type="match status" value="1"/>
</dbReference>
<dbReference type="SUPFAM" id="SSF52080">
    <property type="entry name" value="Ribosomal proteins L15p and L18e"/>
    <property type="match status" value="1"/>
</dbReference>
<dbReference type="PROSITE" id="PS00475">
    <property type="entry name" value="RIBOSOMAL_L15"/>
    <property type="match status" value="1"/>
</dbReference>
<accession>B4TJZ0</accession>
<keyword id="KW-0687">Ribonucleoprotein</keyword>
<keyword id="KW-0689">Ribosomal protein</keyword>
<keyword id="KW-0694">RNA-binding</keyword>
<keyword id="KW-0699">rRNA-binding</keyword>
<feature type="chain" id="PRO_1000142876" description="Large ribosomal subunit protein uL15">
    <location>
        <begin position="1"/>
        <end position="144"/>
    </location>
</feature>
<feature type="region of interest" description="Disordered" evidence="2">
    <location>
        <begin position="1"/>
        <end position="54"/>
    </location>
</feature>
<feature type="compositionally biased region" description="Gly residues" evidence="2">
    <location>
        <begin position="21"/>
        <end position="31"/>
    </location>
</feature>
<name>RL15_SALHS</name>
<evidence type="ECO:0000255" key="1">
    <source>
        <dbReference type="HAMAP-Rule" id="MF_01341"/>
    </source>
</evidence>
<evidence type="ECO:0000256" key="2">
    <source>
        <dbReference type="SAM" id="MobiDB-lite"/>
    </source>
</evidence>
<evidence type="ECO:0000305" key="3"/>
<reference key="1">
    <citation type="journal article" date="2011" name="J. Bacteriol.">
        <title>Comparative genomics of 28 Salmonella enterica isolates: evidence for CRISPR-mediated adaptive sublineage evolution.</title>
        <authorList>
            <person name="Fricke W.F."/>
            <person name="Mammel M.K."/>
            <person name="McDermott P.F."/>
            <person name="Tartera C."/>
            <person name="White D.G."/>
            <person name="Leclerc J.E."/>
            <person name="Ravel J."/>
            <person name="Cebula T.A."/>
        </authorList>
    </citation>
    <scope>NUCLEOTIDE SEQUENCE [LARGE SCALE GENOMIC DNA]</scope>
    <source>
        <strain>SL476</strain>
    </source>
</reference>
<protein>
    <recommendedName>
        <fullName evidence="1">Large ribosomal subunit protein uL15</fullName>
    </recommendedName>
    <alternativeName>
        <fullName evidence="3">50S ribosomal protein L15</fullName>
    </alternativeName>
</protein>
<gene>
    <name evidence="1" type="primary">rplO</name>
    <name type="ordered locus">SeHA_C3725</name>
</gene>
<sequence>MRLNTLSPAEGSKKAGKRLGRGIGSGLGKTGGRGHKGQKSRSGGGVRRGFEGGQMPLYRRLPKFGFTSRKAAITAEVRLSDLAKVEGGVVDLNTLKAANIIGIQIEFAKVILAGEVTTPVTVRGLRVTKGARAAIEAAGGKIEE</sequence>
<organism>
    <name type="scientific">Salmonella heidelberg (strain SL476)</name>
    <dbReference type="NCBI Taxonomy" id="454169"/>
    <lineage>
        <taxon>Bacteria</taxon>
        <taxon>Pseudomonadati</taxon>
        <taxon>Pseudomonadota</taxon>
        <taxon>Gammaproteobacteria</taxon>
        <taxon>Enterobacterales</taxon>
        <taxon>Enterobacteriaceae</taxon>
        <taxon>Salmonella</taxon>
    </lineage>
</organism>
<comment type="function">
    <text evidence="1">Binds to the 23S rRNA.</text>
</comment>
<comment type="subunit">
    <text evidence="1">Part of the 50S ribosomal subunit.</text>
</comment>
<comment type="similarity">
    <text evidence="1">Belongs to the universal ribosomal protein uL15 family.</text>
</comment>